<dbReference type="EC" id="1.9.6.1" evidence="1"/>
<dbReference type="EMBL" id="AP007255">
    <property type="protein sequence ID" value="BAE51494.1"/>
    <property type="molecule type" value="Genomic_DNA"/>
</dbReference>
<dbReference type="RefSeq" id="WP_011385070.1">
    <property type="nucleotide sequence ID" value="NC_007626.1"/>
</dbReference>
<dbReference type="SMR" id="Q2W3T1"/>
<dbReference type="STRING" id="342108.amb2690"/>
<dbReference type="KEGG" id="mag:amb2690"/>
<dbReference type="HOGENOM" id="CLU_000422_13_4_5"/>
<dbReference type="OrthoDB" id="9803192at2"/>
<dbReference type="Proteomes" id="UP000007058">
    <property type="component" value="Chromosome"/>
</dbReference>
<dbReference type="GO" id="GO:0016020">
    <property type="term" value="C:membrane"/>
    <property type="evidence" value="ECO:0007669"/>
    <property type="project" value="TreeGrafter"/>
</dbReference>
<dbReference type="GO" id="GO:0009325">
    <property type="term" value="C:nitrate reductase complex"/>
    <property type="evidence" value="ECO:0007669"/>
    <property type="project" value="TreeGrafter"/>
</dbReference>
<dbReference type="GO" id="GO:0042597">
    <property type="term" value="C:periplasmic space"/>
    <property type="evidence" value="ECO:0007669"/>
    <property type="project" value="UniProtKB-SubCell"/>
</dbReference>
<dbReference type="GO" id="GO:0051539">
    <property type="term" value="F:4 iron, 4 sulfur cluster binding"/>
    <property type="evidence" value="ECO:0007669"/>
    <property type="project" value="UniProtKB-KW"/>
</dbReference>
<dbReference type="GO" id="GO:0009055">
    <property type="term" value="F:electron transfer activity"/>
    <property type="evidence" value="ECO:0007669"/>
    <property type="project" value="UniProtKB-UniRule"/>
</dbReference>
<dbReference type="GO" id="GO:0005506">
    <property type="term" value="F:iron ion binding"/>
    <property type="evidence" value="ECO:0007669"/>
    <property type="project" value="UniProtKB-UniRule"/>
</dbReference>
<dbReference type="GO" id="GO:0030151">
    <property type="term" value="F:molybdenum ion binding"/>
    <property type="evidence" value="ECO:0007669"/>
    <property type="project" value="InterPro"/>
</dbReference>
<dbReference type="GO" id="GO:0043546">
    <property type="term" value="F:molybdopterin cofactor binding"/>
    <property type="evidence" value="ECO:0007669"/>
    <property type="project" value="InterPro"/>
</dbReference>
<dbReference type="GO" id="GO:0050140">
    <property type="term" value="F:nitrate reductase (cytochrome) activity"/>
    <property type="evidence" value="ECO:0007669"/>
    <property type="project" value="UniProtKB-EC"/>
</dbReference>
<dbReference type="GO" id="GO:0045333">
    <property type="term" value="P:cellular respiration"/>
    <property type="evidence" value="ECO:0007669"/>
    <property type="project" value="UniProtKB-ARBA"/>
</dbReference>
<dbReference type="GO" id="GO:0006777">
    <property type="term" value="P:Mo-molybdopterin cofactor biosynthetic process"/>
    <property type="evidence" value="ECO:0007669"/>
    <property type="project" value="UniProtKB-UniRule"/>
</dbReference>
<dbReference type="GO" id="GO:0042128">
    <property type="term" value="P:nitrate assimilation"/>
    <property type="evidence" value="ECO:0007669"/>
    <property type="project" value="UniProtKB-UniRule"/>
</dbReference>
<dbReference type="CDD" id="cd02791">
    <property type="entry name" value="MopB_CT_Nitrate-R-NapA-like"/>
    <property type="match status" value="1"/>
</dbReference>
<dbReference type="CDD" id="cd02754">
    <property type="entry name" value="MopB_Nitrate-R-NapA-like"/>
    <property type="match status" value="1"/>
</dbReference>
<dbReference type="FunFam" id="2.40.40.20:FF:000005">
    <property type="entry name" value="Periplasmic nitrate reductase"/>
    <property type="match status" value="1"/>
</dbReference>
<dbReference type="Gene3D" id="2.40.40.20">
    <property type="match status" value="1"/>
</dbReference>
<dbReference type="Gene3D" id="3.30.200.210">
    <property type="match status" value="1"/>
</dbReference>
<dbReference type="Gene3D" id="3.40.50.740">
    <property type="match status" value="1"/>
</dbReference>
<dbReference type="Gene3D" id="3.40.228.10">
    <property type="entry name" value="Dimethylsulfoxide Reductase, domain 2"/>
    <property type="match status" value="1"/>
</dbReference>
<dbReference type="HAMAP" id="MF_01630">
    <property type="entry name" value="Nitrate_reduct_NapA"/>
    <property type="match status" value="1"/>
</dbReference>
<dbReference type="InterPro" id="IPR009010">
    <property type="entry name" value="Asp_de-COase-like_dom_sf"/>
</dbReference>
<dbReference type="InterPro" id="IPR041957">
    <property type="entry name" value="CT_Nitrate-R-NapA-like"/>
</dbReference>
<dbReference type="InterPro" id="IPR006657">
    <property type="entry name" value="MoPterin_dinucl-bd_dom"/>
</dbReference>
<dbReference type="InterPro" id="IPR006656">
    <property type="entry name" value="Mopterin_OxRdtase"/>
</dbReference>
<dbReference type="InterPro" id="IPR006963">
    <property type="entry name" value="Mopterin_OxRdtase_4Fe-4S_dom"/>
</dbReference>
<dbReference type="InterPro" id="IPR010051">
    <property type="entry name" value="Periplasm_NO3_reductase_lsu"/>
</dbReference>
<dbReference type="InterPro" id="IPR050123">
    <property type="entry name" value="Prok_molybdopt-oxidoreductase"/>
</dbReference>
<dbReference type="InterPro" id="IPR006311">
    <property type="entry name" value="TAT_signal"/>
</dbReference>
<dbReference type="InterPro" id="IPR019546">
    <property type="entry name" value="TAT_signal_bac_arc"/>
</dbReference>
<dbReference type="NCBIfam" id="TIGR01706">
    <property type="entry name" value="NAPA"/>
    <property type="match status" value="1"/>
</dbReference>
<dbReference type="NCBIfam" id="NF010055">
    <property type="entry name" value="PRK13532.1"/>
    <property type="match status" value="1"/>
</dbReference>
<dbReference type="NCBIfam" id="TIGR01409">
    <property type="entry name" value="TAT_signal_seq"/>
    <property type="match status" value="1"/>
</dbReference>
<dbReference type="PANTHER" id="PTHR43105:SF11">
    <property type="entry name" value="PERIPLASMIC NITRATE REDUCTASE"/>
    <property type="match status" value="1"/>
</dbReference>
<dbReference type="PANTHER" id="PTHR43105">
    <property type="entry name" value="RESPIRATORY NITRATE REDUCTASE"/>
    <property type="match status" value="1"/>
</dbReference>
<dbReference type="Pfam" id="PF04879">
    <property type="entry name" value="Molybdop_Fe4S4"/>
    <property type="match status" value="1"/>
</dbReference>
<dbReference type="Pfam" id="PF00384">
    <property type="entry name" value="Molybdopterin"/>
    <property type="match status" value="1"/>
</dbReference>
<dbReference type="Pfam" id="PF01568">
    <property type="entry name" value="Molydop_binding"/>
    <property type="match status" value="1"/>
</dbReference>
<dbReference type="SMART" id="SM00926">
    <property type="entry name" value="Molybdop_Fe4S4"/>
    <property type="match status" value="1"/>
</dbReference>
<dbReference type="SUPFAM" id="SSF50692">
    <property type="entry name" value="ADC-like"/>
    <property type="match status" value="1"/>
</dbReference>
<dbReference type="SUPFAM" id="SSF53706">
    <property type="entry name" value="Formate dehydrogenase/DMSO reductase, domains 1-3"/>
    <property type="match status" value="1"/>
</dbReference>
<dbReference type="PROSITE" id="PS51669">
    <property type="entry name" value="4FE4S_MOW_BIS_MGD"/>
    <property type="match status" value="1"/>
</dbReference>
<dbReference type="PROSITE" id="PS51318">
    <property type="entry name" value="TAT"/>
    <property type="match status" value="1"/>
</dbReference>
<evidence type="ECO:0000255" key="1">
    <source>
        <dbReference type="HAMAP-Rule" id="MF_01630"/>
    </source>
</evidence>
<sequence>MSLTRRDFIKANAVAATAAAAGIATPAIAQPAKANIRWDKGVCRFCGTGCAVLVGVQDGRVVATQGDPDSPVNRGLNCIKGYFLSKIMYGEDRLTKPLLRMKNGKFDKNGEFQPISWDQAFDIMAEKWKEQLKKPDGVTRVGMFGSGQWTIWEGYAASKLFKAGFRSNNLDPNARHCMASAVAGFMRTFGIDEPMGCYDDIEQTDAFVLWGSNMAEMHPILWSRVTDRRLTHEGCKVAVLSTFEHRSFELADIPMVFTPQTDLAILNYICHYIISKNAYDKDFIEKHVNFKKGATDIGYGLRPTHALEKDQANAATPDKSDPMTFDEFKAFVAEYTLEKVAKLSGVPADKLEALAKLYADPKVKVVSFWTMGFNQHARGTWVNNMIYNVHLLMGKISEPGNSPFSLTGQPSACGTAREVGTFAHRLPADMVVMNDKHREITEGLWKLPPGTLNPKIGYHAVLQHRMLKDGKLNAYWVMCTNNMQTAPNMNEEGYPGYRNPANFIVVSDPYPTVTALAADLILPTAMWMEKEGAYGNAERRTQFWRQQVKAPGEAKSDLWQIMEFSKRFKIEEVWPEELLAKKPELRGKTLFDVLYKNGQVDKFPATDIQAGFENDEAKAFGFYPQKGLFEEYASFGRGHAHDLAPFEAYHKARGLRWPVVDGKETLWRFREGYDPYVKAGEGVKFYGKPDGKAWIFALPYQPAAESPDKEFDLWLSTGRVLEHWHSGSMTRRVPELHKSVPNAVLYMHPNDAAKRNLRNGDVVKVASRRGEVTTRIDTRGRNKPPEGLVFMPFFDESQLVNKLTLDATCPISKETDYKKCAVKVSKA</sequence>
<protein>
    <recommendedName>
        <fullName evidence="1">Periplasmic nitrate reductase</fullName>
        <ecNumber evidence="1">1.9.6.1</ecNumber>
    </recommendedName>
</protein>
<feature type="signal peptide" description="Tat-type signal" evidence="1">
    <location>
        <begin position="1"/>
        <end position="34"/>
    </location>
</feature>
<feature type="chain" id="PRO_0000256074" description="Periplasmic nitrate reductase" evidence="1">
    <location>
        <begin position="35"/>
        <end position="827"/>
    </location>
</feature>
<feature type="domain" description="4Fe-4S Mo/W bis-MGD-type" evidence="1">
    <location>
        <begin position="36"/>
        <end position="92"/>
    </location>
</feature>
<feature type="binding site" evidence="1">
    <location>
        <position position="43"/>
    </location>
    <ligand>
        <name>[4Fe-4S] cluster</name>
        <dbReference type="ChEBI" id="CHEBI:49883"/>
    </ligand>
</feature>
<feature type="binding site" evidence="1">
    <location>
        <position position="46"/>
    </location>
    <ligand>
        <name>[4Fe-4S] cluster</name>
        <dbReference type="ChEBI" id="CHEBI:49883"/>
    </ligand>
</feature>
<feature type="binding site" evidence="1">
    <location>
        <position position="50"/>
    </location>
    <ligand>
        <name>[4Fe-4S] cluster</name>
        <dbReference type="ChEBI" id="CHEBI:49883"/>
    </ligand>
</feature>
<feature type="binding site" evidence="1">
    <location>
        <position position="78"/>
    </location>
    <ligand>
        <name>[4Fe-4S] cluster</name>
        <dbReference type="ChEBI" id="CHEBI:49883"/>
    </ligand>
</feature>
<feature type="binding site" evidence="1">
    <location>
        <position position="80"/>
    </location>
    <ligand>
        <name>Mo-bis(molybdopterin guanine dinucleotide)</name>
        <dbReference type="ChEBI" id="CHEBI:60539"/>
    </ligand>
</feature>
<feature type="binding site" evidence="1">
    <location>
        <position position="148"/>
    </location>
    <ligand>
        <name>Mo-bis(molybdopterin guanine dinucleotide)</name>
        <dbReference type="ChEBI" id="CHEBI:60539"/>
    </ligand>
</feature>
<feature type="binding site" evidence="1">
    <location>
        <position position="173"/>
    </location>
    <ligand>
        <name>Mo-bis(molybdopterin guanine dinucleotide)</name>
        <dbReference type="ChEBI" id="CHEBI:60539"/>
    </ligand>
</feature>
<feature type="binding site" evidence="1">
    <location>
        <position position="177"/>
    </location>
    <ligand>
        <name>Mo-bis(molybdopterin guanine dinucleotide)</name>
        <dbReference type="ChEBI" id="CHEBI:60539"/>
    </ligand>
</feature>
<feature type="binding site" evidence="1">
    <location>
        <begin position="210"/>
        <end position="217"/>
    </location>
    <ligand>
        <name>Mo-bis(molybdopterin guanine dinucleotide)</name>
        <dbReference type="ChEBI" id="CHEBI:60539"/>
    </ligand>
</feature>
<feature type="binding site" evidence="1">
    <location>
        <begin position="241"/>
        <end position="245"/>
    </location>
    <ligand>
        <name>Mo-bis(molybdopterin guanine dinucleotide)</name>
        <dbReference type="ChEBI" id="CHEBI:60539"/>
    </ligand>
</feature>
<feature type="binding site" evidence="1">
    <location>
        <begin position="260"/>
        <end position="262"/>
    </location>
    <ligand>
        <name>Mo-bis(molybdopterin guanine dinucleotide)</name>
        <dbReference type="ChEBI" id="CHEBI:60539"/>
    </ligand>
</feature>
<feature type="binding site" evidence="1">
    <location>
        <position position="371"/>
    </location>
    <ligand>
        <name>Mo-bis(molybdopterin guanine dinucleotide)</name>
        <dbReference type="ChEBI" id="CHEBI:60539"/>
    </ligand>
</feature>
<feature type="binding site" evidence="1">
    <location>
        <position position="375"/>
    </location>
    <ligand>
        <name>Mo-bis(molybdopterin guanine dinucleotide)</name>
        <dbReference type="ChEBI" id="CHEBI:60539"/>
    </ligand>
</feature>
<feature type="binding site" evidence="1">
    <location>
        <position position="481"/>
    </location>
    <ligand>
        <name>Mo-bis(molybdopterin guanine dinucleotide)</name>
        <dbReference type="ChEBI" id="CHEBI:60539"/>
    </ligand>
</feature>
<feature type="binding site" evidence="1">
    <location>
        <begin position="507"/>
        <end position="508"/>
    </location>
    <ligand>
        <name>Mo-bis(molybdopterin guanine dinucleotide)</name>
        <dbReference type="ChEBI" id="CHEBI:60539"/>
    </ligand>
</feature>
<feature type="binding site" evidence="1">
    <location>
        <position position="530"/>
    </location>
    <ligand>
        <name>Mo-bis(molybdopterin guanine dinucleotide)</name>
        <dbReference type="ChEBI" id="CHEBI:60539"/>
    </ligand>
</feature>
<feature type="binding site" evidence="1">
    <location>
        <position position="557"/>
    </location>
    <ligand>
        <name>Mo-bis(molybdopterin guanine dinucleotide)</name>
        <dbReference type="ChEBI" id="CHEBI:60539"/>
    </ligand>
</feature>
<feature type="binding site" evidence="1">
    <location>
        <begin position="717"/>
        <end position="726"/>
    </location>
    <ligand>
        <name>Mo-bis(molybdopterin guanine dinucleotide)</name>
        <dbReference type="ChEBI" id="CHEBI:60539"/>
    </ligand>
</feature>
<feature type="binding site" evidence="1">
    <location>
        <position position="793"/>
    </location>
    <ligand>
        <name>substrate</name>
    </ligand>
</feature>
<feature type="binding site" evidence="1">
    <location>
        <position position="801"/>
    </location>
    <ligand>
        <name>Mo-bis(molybdopterin guanine dinucleotide)</name>
        <dbReference type="ChEBI" id="CHEBI:60539"/>
    </ligand>
</feature>
<feature type="binding site" evidence="1">
    <location>
        <position position="818"/>
    </location>
    <ligand>
        <name>Mo-bis(molybdopterin guanine dinucleotide)</name>
        <dbReference type="ChEBI" id="CHEBI:60539"/>
    </ligand>
</feature>
<reference key="1">
    <citation type="journal article" date="2005" name="DNA Res.">
        <title>Complete genome sequence of the facultative anaerobic magnetotactic bacterium Magnetospirillum sp. strain AMB-1.</title>
        <authorList>
            <person name="Matsunaga T."/>
            <person name="Okamura Y."/>
            <person name="Fukuda Y."/>
            <person name="Wahyudi A.T."/>
            <person name="Murase Y."/>
            <person name="Takeyama H."/>
        </authorList>
    </citation>
    <scope>NUCLEOTIDE SEQUENCE [LARGE SCALE GENOMIC DNA]</scope>
    <source>
        <strain>ATCC 700264 / AMB-1</strain>
    </source>
</reference>
<gene>
    <name evidence="1" type="primary">napA</name>
    <name type="ordered locus">amb2690</name>
</gene>
<comment type="function">
    <text evidence="1">Catalytic subunit of the periplasmic nitrate reductase complex NapAB. Receives electrons from NapB and catalyzes the reduction of nitrate to nitrite.</text>
</comment>
<comment type="catalytic activity">
    <reaction evidence="1">
        <text>2 Fe(II)-[cytochrome] + nitrate + 2 H(+) = 2 Fe(III)-[cytochrome] + nitrite + H2O</text>
        <dbReference type="Rhea" id="RHEA:12909"/>
        <dbReference type="Rhea" id="RHEA-COMP:11777"/>
        <dbReference type="Rhea" id="RHEA-COMP:11778"/>
        <dbReference type="ChEBI" id="CHEBI:15377"/>
        <dbReference type="ChEBI" id="CHEBI:15378"/>
        <dbReference type="ChEBI" id="CHEBI:16301"/>
        <dbReference type="ChEBI" id="CHEBI:17632"/>
        <dbReference type="ChEBI" id="CHEBI:29033"/>
        <dbReference type="ChEBI" id="CHEBI:29034"/>
        <dbReference type="EC" id="1.9.6.1"/>
    </reaction>
</comment>
<comment type="cofactor">
    <cofactor evidence="1">
        <name>[4Fe-4S] cluster</name>
        <dbReference type="ChEBI" id="CHEBI:49883"/>
    </cofactor>
    <text evidence="1">Binds 1 [4Fe-4S] cluster.</text>
</comment>
<comment type="cofactor">
    <cofactor evidence="1">
        <name>Mo-bis(molybdopterin guanine dinucleotide)</name>
        <dbReference type="ChEBI" id="CHEBI:60539"/>
    </cofactor>
    <text evidence="1">Binds 1 molybdenum-bis(molybdopterin guanine dinucleotide) (Mo-bis-MGD) cofactor per subunit.</text>
</comment>
<comment type="subunit">
    <text evidence="1">Component of the periplasmic nitrate reductase NapAB complex composed of NapA and NapB.</text>
</comment>
<comment type="subcellular location">
    <subcellularLocation>
        <location evidence="1">Periplasm</location>
    </subcellularLocation>
</comment>
<comment type="PTM">
    <text evidence="1">Predicted to be exported by the Tat system. The position of the signal peptide cleavage has not been experimentally proven.</text>
</comment>
<comment type="similarity">
    <text evidence="1">Belongs to the prokaryotic molybdopterin-containing oxidoreductase family. NasA/NapA/NarB subfamily.</text>
</comment>
<keyword id="KW-0004">4Fe-4S</keyword>
<keyword id="KW-0249">Electron transport</keyword>
<keyword id="KW-0408">Iron</keyword>
<keyword id="KW-0411">Iron-sulfur</keyword>
<keyword id="KW-0479">Metal-binding</keyword>
<keyword id="KW-0500">Molybdenum</keyword>
<keyword id="KW-0534">Nitrate assimilation</keyword>
<keyword id="KW-0560">Oxidoreductase</keyword>
<keyword id="KW-0574">Periplasm</keyword>
<keyword id="KW-0732">Signal</keyword>
<keyword id="KW-0813">Transport</keyword>
<organism>
    <name type="scientific">Paramagnetospirillum magneticum (strain ATCC 700264 / AMB-1)</name>
    <name type="common">Magnetospirillum magneticum</name>
    <dbReference type="NCBI Taxonomy" id="342108"/>
    <lineage>
        <taxon>Bacteria</taxon>
        <taxon>Pseudomonadati</taxon>
        <taxon>Pseudomonadota</taxon>
        <taxon>Alphaproteobacteria</taxon>
        <taxon>Rhodospirillales</taxon>
        <taxon>Magnetospirillaceae</taxon>
        <taxon>Paramagnetospirillum</taxon>
    </lineage>
</organism>
<name>NAPA_PARM1</name>
<proteinExistence type="inferred from homology"/>
<accession>Q2W3T1</accession>